<organism>
    <name type="scientific">Macaca thibetana</name>
    <name type="common">Pere David's macaque</name>
    <name type="synonym">Tibetan macaque</name>
    <dbReference type="NCBI Taxonomy" id="54602"/>
    <lineage>
        <taxon>Eukaryota</taxon>
        <taxon>Metazoa</taxon>
        <taxon>Chordata</taxon>
        <taxon>Craniata</taxon>
        <taxon>Vertebrata</taxon>
        <taxon>Euteleostomi</taxon>
        <taxon>Mammalia</taxon>
        <taxon>Eutheria</taxon>
        <taxon>Euarchontoglires</taxon>
        <taxon>Primates</taxon>
        <taxon>Haplorrhini</taxon>
        <taxon>Catarrhini</taxon>
        <taxon>Cercopithecidae</taxon>
        <taxon>Cercopithecinae</taxon>
        <taxon>Macaca</taxon>
    </lineage>
</organism>
<accession>Q5I6E4</accession>
<gene>
    <name type="primary">IL13</name>
</gene>
<dbReference type="EMBL" id="AY849927">
    <property type="protein sequence ID" value="AAW33961.1"/>
    <property type="molecule type" value="mRNA"/>
</dbReference>
<dbReference type="SMR" id="Q5I6E4"/>
<dbReference type="GlyCosmos" id="Q5I6E4">
    <property type="glycosylation" value="4 sites, No reported glycans"/>
</dbReference>
<dbReference type="GO" id="GO:0005615">
    <property type="term" value="C:extracellular space"/>
    <property type="evidence" value="ECO:0007669"/>
    <property type="project" value="UniProtKB-KW"/>
</dbReference>
<dbReference type="GO" id="GO:0005125">
    <property type="term" value="F:cytokine activity"/>
    <property type="evidence" value="ECO:0007669"/>
    <property type="project" value="UniProtKB-KW"/>
</dbReference>
<dbReference type="GO" id="GO:0005126">
    <property type="term" value="F:cytokine receptor binding"/>
    <property type="evidence" value="ECO:0007669"/>
    <property type="project" value="InterPro"/>
</dbReference>
<dbReference type="GO" id="GO:0006955">
    <property type="term" value="P:immune response"/>
    <property type="evidence" value="ECO:0007669"/>
    <property type="project" value="InterPro"/>
</dbReference>
<dbReference type="FunFam" id="1.20.1250.10:FF:000029">
    <property type="entry name" value="Interleukin-13"/>
    <property type="match status" value="1"/>
</dbReference>
<dbReference type="Gene3D" id="1.20.1250.10">
    <property type="match status" value="1"/>
</dbReference>
<dbReference type="InterPro" id="IPR009079">
    <property type="entry name" value="4_helix_cytokine-like_core"/>
</dbReference>
<dbReference type="InterPro" id="IPR020470">
    <property type="entry name" value="IL-13"/>
</dbReference>
<dbReference type="InterPro" id="IPR001325">
    <property type="entry name" value="IL-4/IL-13"/>
</dbReference>
<dbReference type="InterPro" id="IPR018096">
    <property type="entry name" value="IL-4/IL-13_CS"/>
</dbReference>
<dbReference type="PANTHER" id="PTHR48486">
    <property type="entry name" value="INTERLEUKIN-13"/>
    <property type="match status" value="1"/>
</dbReference>
<dbReference type="PANTHER" id="PTHR48486:SF1">
    <property type="entry name" value="INTERLEUKIN-13"/>
    <property type="match status" value="1"/>
</dbReference>
<dbReference type="Pfam" id="PF03487">
    <property type="entry name" value="IL13"/>
    <property type="match status" value="1"/>
</dbReference>
<dbReference type="PRINTS" id="PR01929">
    <property type="entry name" value="INTRLEUKIN13"/>
</dbReference>
<dbReference type="SMART" id="SM00190">
    <property type="entry name" value="IL4_13"/>
    <property type="match status" value="1"/>
</dbReference>
<dbReference type="SUPFAM" id="SSF47266">
    <property type="entry name" value="4-helical cytokines"/>
    <property type="match status" value="1"/>
</dbReference>
<dbReference type="PROSITE" id="PS00838">
    <property type="entry name" value="INTERLEUKIN_4_13"/>
    <property type="match status" value="1"/>
</dbReference>
<sequence length="132" mass="14337">MALLLTMVIALTCLGGFASPSPVPPSTALKELIEELVNITQNQKAPLCNGSMVWSINLTAGVYCAALESLINVSGCSAIEKTQRMLNGFCPHKVSAGQFSSLRVRDTKIEVAQFVKDLLLHLKKLFREGQFN</sequence>
<reference key="1">
    <citation type="submission" date="2004-12" db="EMBL/GenBank/DDBJ databases">
        <title>Molecular cloning and characterization of the interleukin 13 (IL13) gene from Tibetan macaque (Macaca thibetana) and its expression in Escherichia coli.</title>
        <authorList>
            <person name="Wei K."/>
            <person name="Zou F.D."/>
            <person name="Yue B.S."/>
        </authorList>
    </citation>
    <scope>NUCLEOTIDE SEQUENCE [MRNA]</scope>
</reference>
<protein>
    <recommendedName>
        <fullName>Interleukin-13</fullName>
        <shortName>IL-13</shortName>
    </recommendedName>
</protein>
<evidence type="ECO:0000250" key="1"/>
<evidence type="ECO:0000250" key="2">
    <source>
        <dbReference type="UniProtKB" id="P20109"/>
    </source>
</evidence>
<evidence type="ECO:0000250" key="3">
    <source>
        <dbReference type="UniProtKB" id="P35225"/>
    </source>
</evidence>
<evidence type="ECO:0000250" key="4">
    <source>
        <dbReference type="UniProtKB" id="P42203"/>
    </source>
</evidence>
<evidence type="ECO:0000255" key="5"/>
<evidence type="ECO:0000305" key="6"/>
<feature type="signal peptide" evidence="5">
    <location>
        <begin position="1"/>
        <end position="18"/>
    </location>
</feature>
<feature type="chain" id="PRO_0000015549" description="Interleukin-13">
    <location>
        <begin position="19"/>
        <end position="132"/>
    </location>
</feature>
<feature type="glycosylation site" description="N-linked (GlcNAc...) asparagine" evidence="5">
    <location>
        <position position="38"/>
    </location>
</feature>
<feature type="glycosylation site" description="N-linked (GlcNAc...) asparagine" evidence="5">
    <location>
        <position position="49"/>
    </location>
</feature>
<feature type="glycosylation site" description="N-linked (GlcNAc...) asparagine" evidence="5">
    <location>
        <position position="57"/>
    </location>
</feature>
<feature type="glycosylation site" description="N-linked (GlcNAc...) asparagine" evidence="5">
    <location>
        <position position="72"/>
    </location>
</feature>
<feature type="disulfide bond" evidence="3">
    <location>
        <begin position="48"/>
        <end position="76"/>
    </location>
</feature>
<feature type="disulfide bond" evidence="3">
    <location>
        <begin position="64"/>
        <end position="90"/>
    </location>
</feature>
<comment type="function">
    <text evidence="2 3 4">Cytokine that plays important roles in allergic inflammation and immune response to parasite infection. Synergizes with IL2 in regulating interferon-gamma synthesis. Stimulates B-cell proliferation, and activation of eosinophils, basophils, and mast cells (By similarity). Plays an important role in controlling IL33 activity by modulating the production of transmembrane and soluble forms of interleukin-1 receptor-like 1/IL1RL1 (By similarity). Displays the capacity to antagonize Th1-driven proinflammatory immune response and downregulates synthesis of many proinflammatory cytokines including IL1, IL6, IL10, IL12 and TNF-alpha through a mechanism that partially involves suppression of NF-kappa-B (By similarity). Also functions on nonhematopoietic cells, including endothelial cells where it induces vascular cell adhesion protein 1/VCAM1, which is important in the recruitment of eosinophils. Exerts its biological effects through its receptors which comprises the IL4R chain and the IL13RA1 chain, to activate JAK1 and TYK2, leading to the activation of STAT6. Aside from IL13RA1, another receptor IL13RA2 acts as a high affinity decoy for IL13 and mediates internalization and depletion of extracellular IL13 (By similarity).</text>
</comment>
<comment type="subunit">
    <text evidence="1">Interacts with IL13RA2.</text>
</comment>
<comment type="subcellular location">
    <subcellularLocation>
        <location>Secreted</location>
    </subcellularLocation>
</comment>
<comment type="similarity">
    <text evidence="6">Belongs to the IL-4/IL-13 family.</text>
</comment>
<keyword id="KW-0202">Cytokine</keyword>
<keyword id="KW-1015">Disulfide bond</keyword>
<keyword id="KW-0325">Glycoprotein</keyword>
<keyword id="KW-0964">Secreted</keyword>
<keyword id="KW-0732">Signal</keyword>
<name>IL13_MACTH</name>
<proteinExistence type="evidence at transcript level"/>